<accession>P53909</accession>
<accession>D6W141</accession>
<keyword id="KW-0963">Cytoplasm</keyword>
<keyword id="KW-0378">Hydrolase</keyword>
<keyword id="KW-0479">Metal-binding</keyword>
<keyword id="KW-0546">Nucleotide metabolism</keyword>
<keyword id="KW-0539">Nucleus</keyword>
<keyword id="KW-1185">Reference proteome</keyword>
<keyword id="KW-0832">Ubl conjugation</keyword>
<keyword id="KW-0862">Zinc</keyword>
<comment type="function">
    <text evidence="1 4 5 6 7">Catalyzes the hydrolytic deamination of adenine to hypoxanthine. Plays an important role in the purine salvage pathway and in nitrogen catabolism. Also exhibits a low activity towards N(6)-substituted adenines that are commonly known as the plant hormones cytokinins.</text>
</comment>
<comment type="catalytic activity">
    <reaction evidence="1">
        <text>adenine + H2O + H(+) = hypoxanthine + NH4(+)</text>
        <dbReference type="Rhea" id="RHEA:23688"/>
        <dbReference type="ChEBI" id="CHEBI:15377"/>
        <dbReference type="ChEBI" id="CHEBI:15378"/>
        <dbReference type="ChEBI" id="CHEBI:16708"/>
        <dbReference type="ChEBI" id="CHEBI:17368"/>
        <dbReference type="ChEBI" id="CHEBI:28938"/>
        <dbReference type="EC" id="3.5.4.2"/>
    </reaction>
</comment>
<comment type="cofactor">
    <cofactor evidence="1">
        <name>Zn(2+)</name>
        <dbReference type="ChEBI" id="CHEBI:29105"/>
    </cofactor>
    <text evidence="1">Binds 1 zinc ion per subunit.</text>
</comment>
<comment type="biophysicochemical properties">
    <kinetics>
        <KM evidence="7">55 uM for adenine</KM>
    </kinetics>
    <phDependence>
        <text evidence="7">Optimum pH is 7.0.</text>
    </phDependence>
    <temperatureDependence>
        <text evidence="7">Optimum temperature is 30-37 degrees Celsius.</text>
    </temperatureDependence>
</comment>
<comment type="interaction">
    <interactant intactId="EBI-2197">
        <id>P53909</id>
    </interactant>
    <interactant intactId="EBI-21172">
        <id>P38352</id>
        <label>SAF1</label>
    </interactant>
    <organismsDiffer>false</organismsDiffer>
    <experiments>3</experiments>
</comment>
<comment type="subcellular location">
    <subcellularLocation>
        <location evidence="1 2">Cytoplasm</location>
    </subcellularLocation>
    <subcellularLocation>
        <location evidence="1 2">Nucleus</location>
    </subcellularLocation>
</comment>
<comment type="induction">
    <text evidence="5">Reduced when grown in a poor nitrogen source medium and strongly down-regulated when cells enter quiescence under nutrient-limiting conditions.</text>
</comment>
<comment type="PTM">
    <text evidence="6">Probably ubiquitinated when cells enter quiescence in response to nutrient limitation, since it is specifically degraded via a process requiring the F-box protein SAF1 and components of the SKP1-Cullin-F-box complex.</text>
</comment>
<comment type="miscellaneous">
    <text evidence="3">Present with 20700 molecules/cell in log phase SD medium.</text>
</comment>
<comment type="similarity">
    <text evidence="1">Belongs to the metallo-dependent hydrolases superfamily. Adenosine and AMP deaminases family. Adenine deaminase type 2 subfamily.</text>
</comment>
<evidence type="ECO:0000255" key="1">
    <source>
        <dbReference type="HAMAP-Rule" id="MF_03145"/>
    </source>
</evidence>
<evidence type="ECO:0000269" key="2">
    <source>
    </source>
</evidence>
<evidence type="ECO:0000269" key="3">
    <source>
    </source>
</evidence>
<evidence type="ECO:0000269" key="4">
    <source>
    </source>
</evidence>
<evidence type="ECO:0000269" key="5">
    <source>
    </source>
</evidence>
<evidence type="ECO:0000269" key="6">
    <source>
    </source>
</evidence>
<evidence type="ECO:0000269" key="7">
    <source>
    </source>
</evidence>
<name>ADE_YEAST</name>
<dbReference type="EC" id="3.5.4.2" evidence="1"/>
<dbReference type="EMBL" id="Z46843">
    <property type="protein sequence ID" value="CAA86885.1"/>
    <property type="molecule type" value="Genomic_DNA"/>
</dbReference>
<dbReference type="EMBL" id="Z71417">
    <property type="protein sequence ID" value="CAA96024.1"/>
    <property type="molecule type" value="Genomic_DNA"/>
</dbReference>
<dbReference type="EMBL" id="BK006947">
    <property type="protein sequence ID" value="DAA10407.1"/>
    <property type="molecule type" value="Genomic_DNA"/>
</dbReference>
<dbReference type="PIR" id="S55143">
    <property type="entry name" value="S55143"/>
</dbReference>
<dbReference type="RefSeq" id="NP_014258.1">
    <property type="nucleotide sequence ID" value="NM_001182979.1"/>
</dbReference>
<dbReference type="SMR" id="P53909"/>
<dbReference type="BioGRID" id="35686">
    <property type="interactions" value="408"/>
</dbReference>
<dbReference type="DIP" id="DIP-4342N"/>
<dbReference type="FunCoup" id="P53909">
    <property type="interactions" value="780"/>
</dbReference>
<dbReference type="IntAct" id="P53909">
    <property type="interactions" value="6"/>
</dbReference>
<dbReference type="MINT" id="P53909"/>
<dbReference type="STRING" id="4932.YNL141W"/>
<dbReference type="iPTMnet" id="P53909"/>
<dbReference type="PaxDb" id="4932-YNL141W"/>
<dbReference type="PeptideAtlas" id="P53909"/>
<dbReference type="EnsemblFungi" id="YNL141W_mRNA">
    <property type="protein sequence ID" value="YNL141W"/>
    <property type="gene ID" value="YNL141W"/>
</dbReference>
<dbReference type="GeneID" id="855581"/>
<dbReference type="KEGG" id="sce:YNL141W"/>
<dbReference type="AGR" id="SGD:S000005085"/>
<dbReference type="SGD" id="S000005085">
    <property type="gene designation" value="AAH1"/>
</dbReference>
<dbReference type="VEuPathDB" id="FungiDB:YNL141W"/>
<dbReference type="eggNOG" id="KOG1097">
    <property type="taxonomic scope" value="Eukaryota"/>
</dbReference>
<dbReference type="GeneTree" id="ENSGT00950000183113"/>
<dbReference type="HOGENOM" id="CLU_039228_7_0_1"/>
<dbReference type="InParanoid" id="P53909"/>
<dbReference type="OMA" id="NHFTIHA"/>
<dbReference type="OrthoDB" id="272271at2759"/>
<dbReference type="BioCyc" id="YEAST:YNL141W-MONOMER"/>
<dbReference type="BRENDA" id="3.5.4.2">
    <property type="organism ID" value="984"/>
</dbReference>
<dbReference type="BRENDA" id="3.5.4.4">
    <property type="organism ID" value="984"/>
</dbReference>
<dbReference type="BioGRID-ORCS" id="855581">
    <property type="hits" value="1 hit in 10 CRISPR screens"/>
</dbReference>
<dbReference type="PRO" id="PR:P53909"/>
<dbReference type="Proteomes" id="UP000002311">
    <property type="component" value="Chromosome XIV"/>
</dbReference>
<dbReference type="RNAct" id="P53909">
    <property type="molecule type" value="protein"/>
</dbReference>
<dbReference type="GO" id="GO:0005737">
    <property type="term" value="C:cytoplasm"/>
    <property type="evidence" value="ECO:0007005"/>
    <property type="project" value="SGD"/>
</dbReference>
<dbReference type="GO" id="GO:0005634">
    <property type="term" value="C:nucleus"/>
    <property type="evidence" value="ECO:0007005"/>
    <property type="project" value="SGD"/>
</dbReference>
<dbReference type="GO" id="GO:0000034">
    <property type="term" value="F:adenine deaminase activity"/>
    <property type="evidence" value="ECO:0000314"/>
    <property type="project" value="SGD"/>
</dbReference>
<dbReference type="GO" id="GO:0008270">
    <property type="term" value="F:zinc ion binding"/>
    <property type="evidence" value="ECO:0007669"/>
    <property type="project" value="UniProtKB-UniRule"/>
</dbReference>
<dbReference type="GO" id="GO:0006146">
    <property type="term" value="P:adenine catabolic process"/>
    <property type="evidence" value="ECO:0000314"/>
    <property type="project" value="SGD"/>
</dbReference>
<dbReference type="GO" id="GO:0043103">
    <property type="term" value="P:hypoxanthine salvage"/>
    <property type="evidence" value="ECO:0000314"/>
    <property type="project" value="SGD"/>
</dbReference>
<dbReference type="GO" id="GO:0009117">
    <property type="term" value="P:nucleotide metabolic process"/>
    <property type="evidence" value="ECO:0007669"/>
    <property type="project" value="UniProtKB-KW"/>
</dbReference>
<dbReference type="GO" id="GO:0009168">
    <property type="term" value="P:purine ribonucleoside monophosphate biosynthetic process"/>
    <property type="evidence" value="ECO:0007669"/>
    <property type="project" value="InterPro"/>
</dbReference>
<dbReference type="GO" id="GO:0043101">
    <property type="term" value="P:purine-containing compound salvage"/>
    <property type="evidence" value="ECO:0000314"/>
    <property type="project" value="SGD"/>
</dbReference>
<dbReference type="CDD" id="cd01320">
    <property type="entry name" value="ADA"/>
    <property type="match status" value="1"/>
</dbReference>
<dbReference type="FunFam" id="3.20.20.140:FF:000039">
    <property type="entry name" value="Adenine deaminase"/>
    <property type="match status" value="1"/>
</dbReference>
<dbReference type="Gene3D" id="3.20.20.140">
    <property type="entry name" value="Metal-dependent hydrolases"/>
    <property type="match status" value="1"/>
</dbReference>
<dbReference type="HAMAP" id="MF_01962">
    <property type="entry name" value="Adenine_deaminase"/>
    <property type="match status" value="1"/>
</dbReference>
<dbReference type="InterPro" id="IPR006650">
    <property type="entry name" value="A/AMP_deam_AS"/>
</dbReference>
<dbReference type="InterPro" id="IPR001365">
    <property type="entry name" value="A_deaminase_dom"/>
</dbReference>
<dbReference type="InterPro" id="IPR028892">
    <property type="entry name" value="ADE"/>
</dbReference>
<dbReference type="InterPro" id="IPR006330">
    <property type="entry name" value="Ado/ade_deaminase"/>
</dbReference>
<dbReference type="InterPro" id="IPR032466">
    <property type="entry name" value="Metal_Hydrolase"/>
</dbReference>
<dbReference type="NCBIfam" id="TIGR01430">
    <property type="entry name" value="aden_deam"/>
    <property type="match status" value="1"/>
</dbReference>
<dbReference type="PANTHER" id="PTHR43114">
    <property type="entry name" value="ADENINE DEAMINASE"/>
    <property type="match status" value="1"/>
</dbReference>
<dbReference type="PANTHER" id="PTHR43114:SF6">
    <property type="entry name" value="ADENINE DEAMINASE"/>
    <property type="match status" value="1"/>
</dbReference>
<dbReference type="Pfam" id="PF00962">
    <property type="entry name" value="A_deaminase"/>
    <property type="match status" value="1"/>
</dbReference>
<dbReference type="SUPFAM" id="SSF51556">
    <property type="entry name" value="Metallo-dependent hydrolases"/>
    <property type="match status" value="1"/>
</dbReference>
<dbReference type="PROSITE" id="PS00485">
    <property type="entry name" value="A_DEAMINASE"/>
    <property type="match status" value="1"/>
</dbReference>
<feature type="chain" id="PRO_0000194360" description="Adenine deaminase">
    <location>
        <begin position="1"/>
        <end position="347"/>
    </location>
</feature>
<feature type="active site" description="Proton donor" evidence="1">
    <location>
        <position position="207"/>
    </location>
</feature>
<feature type="binding site" evidence="1">
    <location>
        <position position="16"/>
    </location>
    <ligand>
        <name>Zn(2+)</name>
        <dbReference type="ChEBI" id="CHEBI:29105"/>
        <note>catalytic</note>
    </ligand>
</feature>
<feature type="binding site" evidence="1">
    <location>
        <position position="18"/>
    </location>
    <ligand>
        <name>Zn(2+)</name>
        <dbReference type="ChEBI" id="CHEBI:29105"/>
        <note>catalytic</note>
    </ligand>
</feature>
<feature type="binding site" evidence="1">
    <location>
        <position position="204"/>
    </location>
    <ligand>
        <name>Zn(2+)</name>
        <dbReference type="ChEBI" id="CHEBI:29105"/>
        <note>catalytic</note>
    </ligand>
</feature>
<feature type="binding site" evidence="1">
    <location>
        <position position="285"/>
    </location>
    <ligand>
        <name>Zn(2+)</name>
        <dbReference type="ChEBI" id="CHEBI:29105"/>
        <note>catalytic</note>
    </ligand>
</feature>
<feature type="binding site" evidence="1">
    <location>
        <position position="286"/>
    </location>
    <ligand>
        <name>substrate</name>
    </ligand>
</feature>
<feature type="site" description="Important for catalytic activity" evidence="1">
    <location>
        <position position="228"/>
    </location>
</feature>
<feature type="mutagenesis site" description="In aah1-2; impairs AAH1 degradation during postdiauxic growth and leads to weak interaction with SAF1." evidence="6">
    <original>I</original>
    <variation>T</variation>
    <location>
        <position position="69"/>
    </location>
</feature>
<feature type="mutagenesis site" description="In aah1-3; impairs AAH1 degradation during postdiauxic growth and leads to weak interaction with SAF1." evidence="6">
    <original>N</original>
    <variation>K</variation>
    <location>
        <position position="72"/>
    </location>
</feature>
<feature type="mutagenesis site" description="In aah1-4; impairs AAH1 degradation during postdiauxic growth and leads to weak interaction with SAF1." evidence="6">
    <original>D</original>
    <variation>G</variation>
    <location>
        <position position="219"/>
    </location>
</feature>
<feature type="mutagenesis site" description="In aah1-6; impairs AAH1 degradation during postdiauxic growth and leads to weak interaction with SAF1." evidence="6">
    <original>E</original>
    <variation>V</variation>
    <location>
        <position position="237"/>
    </location>
</feature>
<feature type="mutagenesis site" description="In aah1-7; impairs AAH1 degradation during postdiauxic growth." evidence="6">
    <original>K</original>
    <variation>E</variation>
    <location>
        <position position="329"/>
    </location>
</feature>
<reference key="1">
    <citation type="journal article" date="1995" name="Yeast">
        <title>A 43.5 kb segment of yeast chromosome XIV, which contains MFA2, MEP2, CAP/SRV2, NAM9, FKB1/FPR1/RBP1, MOM22 and CPT1, predicts an adenosine deaminase gene and 14 new open reading frames.</title>
        <authorList>
            <person name="Mallet L."/>
            <person name="Bussereau F."/>
            <person name="Jacquet M."/>
        </authorList>
    </citation>
    <scope>NUCLEOTIDE SEQUENCE [GENOMIC DNA]</scope>
    <source>
        <strain>ATCC 204508 / S288c</strain>
    </source>
</reference>
<reference key="2">
    <citation type="journal article" date="2003" name="J. Mol. Biol.">
        <title>Sub-families of alpha/beta barrel enzymes: a new adenine deaminase family.</title>
        <authorList>
            <person name="Ribard C."/>
            <person name="Rochet M."/>
            <person name="Labedan B."/>
            <person name="Daignan-Fornier B."/>
            <person name="Alzari P."/>
            <person name="Scazzocchio C."/>
            <person name="Oestreicher N."/>
        </authorList>
    </citation>
    <scope>NUCLEOTIDE SEQUENCE [GENOMIC DNA]</scope>
    <scope>FUNCTION</scope>
</reference>
<reference key="3">
    <citation type="journal article" date="1997" name="Nature">
        <title>The nucleotide sequence of Saccharomyces cerevisiae chromosome XIV and its evolutionary implications.</title>
        <authorList>
            <person name="Philippsen P."/>
            <person name="Kleine K."/>
            <person name="Poehlmann R."/>
            <person name="Duesterhoeft A."/>
            <person name="Hamberg K."/>
            <person name="Hegemann J.H."/>
            <person name="Obermaier B."/>
            <person name="Urrestarazu L.A."/>
            <person name="Aert R."/>
            <person name="Albermann K."/>
            <person name="Altmann R."/>
            <person name="Andre B."/>
            <person name="Baladron V."/>
            <person name="Ballesta J.P.G."/>
            <person name="Becam A.-M."/>
            <person name="Beinhauer J.D."/>
            <person name="Boskovic J."/>
            <person name="Buitrago M.J."/>
            <person name="Bussereau F."/>
            <person name="Coster F."/>
            <person name="Crouzet M."/>
            <person name="D'Angelo M."/>
            <person name="Dal Pero F."/>
            <person name="De Antoni A."/>
            <person name="del Rey F."/>
            <person name="Doignon F."/>
            <person name="Domdey H."/>
            <person name="Dubois E."/>
            <person name="Fiedler T.A."/>
            <person name="Fleig U."/>
            <person name="Floeth M."/>
            <person name="Fritz C."/>
            <person name="Gaillardin C."/>
            <person name="Garcia-Cantalejo J.M."/>
            <person name="Glansdorff N."/>
            <person name="Goffeau A."/>
            <person name="Gueldener U."/>
            <person name="Herbert C.J."/>
            <person name="Heumann K."/>
            <person name="Heuss-Neitzel D."/>
            <person name="Hilbert H."/>
            <person name="Hinni K."/>
            <person name="Iraqui Houssaini I."/>
            <person name="Jacquet M."/>
            <person name="Jimenez A."/>
            <person name="Jonniaux J.-L."/>
            <person name="Karpfinger-Hartl L."/>
            <person name="Lanfranchi G."/>
            <person name="Lepingle A."/>
            <person name="Levesque H."/>
            <person name="Lyck R."/>
            <person name="Maftahi M."/>
            <person name="Mallet L."/>
            <person name="Maurer C.T.C."/>
            <person name="Messenguy F."/>
            <person name="Mewes H.-W."/>
            <person name="Moestl D."/>
            <person name="Nasr F."/>
            <person name="Nicaud J.-M."/>
            <person name="Niedenthal R.K."/>
            <person name="Pandolfo D."/>
            <person name="Pierard A."/>
            <person name="Piravandi E."/>
            <person name="Planta R.J."/>
            <person name="Pohl T.M."/>
            <person name="Purnelle B."/>
            <person name="Rebischung C."/>
            <person name="Remacha M.A."/>
            <person name="Revuelta J.L."/>
            <person name="Rinke M."/>
            <person name="Saiz J.E."/>
            <person name="Sartorello F."/>
            <person name="Scherens B."/>
            <person name="Sen-Gupta M."/>
            <person name="Soler-Mira A."/>
            <person name="Urbanus J.H.M."/>
            <person name="Valle G."/>
            <person name="Van Dyck L."/>
            <person name="Verhasselt P."/>
            <person name="Vierendeels F."/>
            <person name="Vissers S."/>
            <person name="Voet M."/>
            <person name="Volckaert G."/>
            <person name="Wach A."/>
            <person name="Wambutt R."/>
            <person name="Wedler H."/>
            <person name="Zollner A."/>
            <person name="Hani J."/>
        </authorList>
    </citation>
    <scope>NUCLEOTIDE SEQUENCE [LARGE SCALE GENOMIC DNA]</scope>
    <source>
        <strain>ATCC 204508 / S288c</strain>
    </source>
</reference>
<reference key="4">
    <citation type="journal article" date="2014" name="G3 (Bethesda)">
        <title>The reference genome sequence of Saccharomyces cerevisiae: Then and now.</title>
        <authorList>
            <person name="Engel S.R."/>
            <person name="Dietrich F.S."/>
            <person name="Fisk D.G."/>
            <person name="Binkley G."/>
            <person name="Balakrishnan R."/>
            <person name="Costanzo M.C."/>
            <person name="Dwight S.S."/>
            <person name="Hitz B.C."/>
            <person name="Karra K."/>
            <person name="Nash R.S."/>
            <person name="Weng S."/>
            <person name="Wong E.D."/>
            <person name="Lloyd P."/>
            <person name="Skrzypek M.S."/>
            <person name="Miyasato S.R."/>
            <person name="Simison M."/>
            <person name="Cherry J.M."/>
        </authorList>
    </citation>
    <scope>GENOME REANNOTATION</scope>
    <source>
        <strain>ATCC 204508 / S288c</strain>
    </source>
</reference>
<reference key="5">
    <citation type="journal article" date="1992" name="J. Bacteriol.">
        <title>Adenine deaminase and adenine utilization in Saccharomyces cerevisiae.</title>
        <authorList>
            <person name="Deeley M.C."/>
        </authorList>
    </citation>
    <scope>FUNCTION</scope>
    <scope>INDUCTION</scope>
</reference>
<reference key="6">
    <citation type="journal article" date="2003" name="Nature">
        <title>Global analysis of protein localization in budding yeast.</title>
        <authorList>
            <person name="Huh W.-K."/>
            <person name="Falvo J.V."/>
            <person name="Gerke L.C."/>
            <person name="Carroll A.S."/>
            <person name="Howson R.W."/>
            <person name="Weissman J.S."/>
            <person name="O'Shea E.K."/>
        </authorList>
    </citation>
    <scope>SUBCELLULAR LOCATION [LARGE SCALE ANALYSIS]</scope>
</reference>
<reference key="7">
    <citation type="journal article" date="2003" name="Nature">
        <title>Global analysis of protein expression in yeast.</title>
        <authorList>
            <person name="Ghaemmaghami S."/>
            <person name="Huh W.-K."/>
            <person name="Bower K."/>
            <person name="Howson R.W."/>
            <person name="Belle A."/>
            <person name="Dephoure N."/>
            <person name="O'Shea E.K."/>
            <person name="Weissman J.S."/>
        </authorList>
    </citation>
    <scope>LEVEL OF PROTEIN EXPRESSION [LARGE SCALE ANALYSIS]</scope>
</reference>
<reference key="8">
    <citation type="journal article" date="2007" name="J. Biol. Chem.">
        <title>Skp1-Cullin-F-box-dependent degradation of Aah1p requires its interaction with the F-box protein Saf1p.</title>
        <authorList>
            <person name="Escusa S."/>
            <person name="Laporte D."/>
            <person name="Massoni A."/>
            <person name="Boucherie H."/>
            <person name="Dautant A."/>
            <person name="Daignan-Fornier B."/>
        </authorList>
    </citation>
    <scope>FUNCTION</scope>
    <scope>INTERACTION WITH SAF1</scope>
    <scope>UBIQUITINATION</scope>
    <scope>MUTAGENESIS OF ILE-69; ASN-72; ASP-219; GLU-237 AND LYS-329</scope>
</reference>
<reference key="9">
    <citation type="journal article" date="2008" name="Biosci. Rep.">
        <title>Hydrolytic cleavage of N6-substituted adenine derivatives by eukaryotic adenine and adenosine deaminases.</title>
        <authorList>
            <person name="Pospisilova H."/>
            <person name="Sebela M."/>
            <person name="Novak O."/>
            <person name="Frebort I."/>
        </authorList>
    </citation>
    <scope>FUNCTION</scope>
    <scope>BIOPHYSICOCHEMICAL PROPERTIES</scope>
</reference>
<sequence length="347" mass="39635">MVSVEFLQELPKCEHHLHLEGTLEPDLLFPLAKRNDIILPEGFPKSVEELNEKYKKFRDLQDFLDYYYIGTNVLISEQDFFDLAWAYFKKVHKQGLVHAEVFYDPQSHTSRGISIETVTKGFQRACDKAFSEFGITSKLIMCLLRHIEPEECLKTIEEATPFIKDGTISALGLDSAEKPFPPHLFVECYGKAASLNKDLKLTAHAGEEGPAQFVSDALDLLQVTRIDHGINSQYDEELLDRLSRDQTMLTICPLSNVKLQVVQSVSELPLQKFLDRDVPFSLNSDDPAYFGGYILDVYTQVSKDFPHWDHETWGRIAKNAIKGSWCDDKRKNGLLSRVDEVVTKYSH</sequence>
<protein>
    <recommendedName>
        <fullName evidence="1">Adenine deaminase</fullName>
        <shortName evidence="1">ADE</shortName>
        <ecNumber evidence="1">3.5.4.2</ecNumber>
    </recommendedName>
    <alternativeName>
        <fullName evidence="1">Adenine aminohydrolase</fullName>
        <shortName evidence="1">AAH</shortName>
    </alternativeName>
</protein>
<proteinExistence type="evidence at protein level"/>
<organism>
    <name type="scientific">Saccharomyces cerevisiae (strain ATCC 204508 / S288c)</name>
    <name type="common">Baker's yeast</name>
    <dbReference type="NCBI Taxonomy" id="559292"/>
    <lineage>
        <taxon>Eukaryota</taxon>
        <taxon>Fungi</taxon>
        <taxon>Dikarya</taxon>
        <taxon>Ascomycota</taxon>
        <taxon>Saccharomycotina</taxon>
        <taxon>Saccharomycetes</taxon>
        <taxon>Saccharomycetales</taxon>
        <taxon>Saccharomycetaceae</taxon>
        <taxon>Saccharomyces</taxon>
    </lineage>
</organism>
<gene>
    <name evidence="1" type="primary">AAH1</name>
    <name type="ordered locus">YNL141W</name>
    <name type="ORF">N1208</name>
    <name type="ORF">N1825</name>
</gene>